<organism>
    <name type="scientific">Bacillus subtilis (strain 168)</name>
    <dbReference type="NCBI Taxonomy" id="224308"/>
    <lineage>
        <taxon>Bacteria</taxon>
        <taxon>Bacillati</taxon>
        <taxon>Bacillota</taxon>
        <taxon>Bacilli</taxon>
        <taxon>Bacillales</taxon>
        <taxon>Bacillaceae</taxon>
        <taxon>Bacillus</taxon>
    </lineage>
</organism>
<name>YQCC_BACSU</name>
<feature type="chain" id="PRO_0000049773" description="Uncharacterized protein YqcC">
    <location>
        <begin position="1"/>
        <end position="366"/>
    </location>
</feature>
<feature type="sequence conflict" description="In Ref. 1; BAA06955 and 2; BAA12419." evidence="1" ref="1 2">
    <original>T</original>
    <variation>P</variation>
    <location>
        <position position="134"/>
    </location>
</feature>
<accession>P45938</accession>
<dbReference type="EMBL" id="D32216">
    <property type="protein sequence ID" value="BAA06955.1"/>
    <property type="status" value="ALT_FRAME"/>
    <property type="molecule type" value="Genomic_DNA"/>
</dbReference>
<dbReference type="EMBL" id="D84432">
    <property type="protein sequence ID" value="BAA12419.1"/>
    <property type="status" value="ALT_FRAME"/>
    <property type="molecule type" value="Genomic_DNA"/>
</dbReference>
<dbReference type="EMBL" id="AL009126">
    <property type="protein sequence ID" value="CAB14536.2"/>
    <property type="molecule type" value="Genomic_DNA"/>
</dbReference>
<dbReference type="PIR" id="B69949">
    <property type="entry name" value="B69949"/>
</dbReference>
<dbReference type="RefSeq" id="NP_390472.2">
    <property type="nucleotide sequence ID" value="NC_000964.3"/>
</dbReference>
<dbReference type="RefSeq" id="WP_003229943.1">
    <property type="nucleotide sequence ID" value="NZ_OZ025638.1"/>
</dbReference>
<dbReference type="FunCoup" id="P45938">
    <property type="interactions" value="67"/>
</dbReference>
<dbReference type="STRING" id="224308.BSU25950"/>
<dbReference type="PaxDb" id="224308-BSU25950"/>
<dbReference type="EnsemblBacteria" id="CAB14536">
    <property type="protein sequence ID" value="CAB14536"/>
    <property type="gene ID" value="BSU_25950"/>
</dbReference>
<dbReference type="GeneID" id="937773"/>
<dbReference type="KEGG" id="bsu:BSU25950"/>
<dbReference type="PATRIC" id="fig|224308.179.peg.2820"/>
<dbReference type="eggNOG" id="ENOG502ZQEV">
    <property type="taxonomic scope" value="Bacteria"/>
</dbReference>
<dbReference type="InParanoid" id="P45938"/>
<dbReference type="OrthoDB" id="2667186at2"/>
<dbReference type="BioCyc" id="BSUB:BSU25950-MONOMER"/>
<dbReference type="Proteomes" id="UP000001570">
    <property type="component" value="Chromosome"/>
</dbReference>
<dbReference type="CDD" id="cd19958">
    <property type="entry name" value="pyocin_knob"/>
    <property type="match status" value="1"/>
</dbReference>
<dbReference type="Gene3D" id="2.60.120.40">
    <property type="match status" value="1"/>
</dbReference>
<dbReference type="InterPro" id="IPR008983">
    <property type="entry name" value="Tumour_necrosis_fac-like_dom"/>
</dbReference>
<dbReference type="SUPFAM" id="SSF49842">
    <property type="entry name" value="TNF-like"/>
    <property type="match status" value="1"/>
</dbReference>
<protein>
    <recommendedName>
        <fullName>Uncharacterized protein YqcC</fullName>
    </recommendedName>
</protein>
<comment type="similarity">
    <text evidence="1">To B.subtilis XkdV.</text>
</comment>
<comment type="sequence caution" evidence="1">
    <conflict type="frameshift">
        <sequence resource="EMBL-CDS" id="BAA06955"/>
    </conflict>
</comment>
<comment type="sequence caution" evidence="1">
    <conflict type="frameshift">
        <sequence resource="EMBL-CDS" id="BAA12419"/>
    </conflict>
</comment>
<gene>
    <name type="primary">yqcC</name>
    <name type="ordered locus">BSU25950</name>
</gene>
<sequence length="366" mass="41771">MAYDAKTDWLPDDPINEDDVNRWEKGIQDAHKDLAVHKNDMNNPHNTTKAQIGLGNVDNVQQASKKEFEEHRNDLQRHITPVERENWNAKETIVGAQEKADKALSDAKYYVDTNYKNNNLTLITGDNAIQDARTGGEEYPLGLTLMDIGQGNTTGYPLGYGIVKNEKYNNYRFTQYFYGTGNESGTYYDSTGVWIRHWWSGSGWTPWQKISGFAHANIGTTGVQYLKKIDHTKIAFNRVIKDSHNAFDTKNNRFIAPNDGMYLIGASIYTLNYTSYINFHLKVYLNGKAYKTLHHVRGDFQEKDNGMNLGLNGNATVPMNKGDYVEIWCYCNYGGDETLKRAVDDKNGVFNFFDIQELGGRNYPRF</sequence>
<keyword id="KW-1185">Reference proteome</keyword>
<proteinExistence type="predicted"/>
<reference key="1">
    <citation type="journal article" date="1995" name="Microbiology">
        <title>Complete nucleotide sequence of a skin element excised by DNA rearrangement during sporulation in Bacillus subtilis.</title>
        <authorList>
            <person name="Takemaru K."/>
            <person name="Mizuno M."/>
            <person name="Sato T."/>
            <person name="Takeuchi M."/>
            <person name="Kobayashi Y."/>
        </authorList>
    </citation>
    <scope>NUCLEOTIDE SEQUENCE [GENOMIC DNA]</scope>
    <source>
        <strain>168 / JH642</strain>
    </source>
</reference>
<reference key="2">
    <citation type="journal article" date="1996" name="Microbiology">
        <title>Systematic sequencing of the 283 kb 210 degrees-232 degrees region of the Bacillus subtilis genome containing the skin element and many sporulation genes.</title>
        <authorList>
            <person name="Mizuno M."/>
            <person name="Masuda S."/>
            <person name="Takemaru K."/>
            <person name="Hosono S."/>
            <person name="Sato T."/>
            <person name="Takeuchi M."/>
            <person name="Kobayashi Y."/>
        </authorList>
    </citation>
    <scope>NUCLEOTIDE SEQUENCE [GENOMIC DNA]</scope>
    <source>
        <strain>168 / JH642</strain>
    </source>
</reference>
<reference key="3">
    <citation type="journal article" date="1997" name="Nature">
        <title>The complete genome sequence of the Gram-positive bacterium Bacillus subtilis.</title>
        <authorList>
            <person name="Kunst F."/>
            <person name="Ogasawara N."/>
            <person name="Moszer I."/>
            <person name="Albertini A.M."/>
            <person name="Alloni G."/>
            <person name="Azevedo V."/>
            <person name="Bertero M.G."/>
            <person name="Bessieres P."/>
            <person name="Bolotin A."/>
            <person name="Borchert S."/>
            <person name="Borriss R."/>
            <person name="Boursier L."/>
            <person name="Brans A."/>
            <person name="Braun M."/>
            <person name="Brignell S.C."/>
            <person name="Bron S."/>
            <person name="Brouillet S."/>
            <person name="Bruschi C.V."/>
            <person name="Caldwell B."/>
            <person name="Capuano V."/>
            <person name="Carter N.M."/>
            <person name="Choi S.-K."/>
            <person name="Codani J.-J."/>
            <person name="Connerton I.F."/>
            <person name="Cummings N.J."/>
            <person name="Daniel R.A."/>
            <person name="Denizot F."/>
            <person name="Devine K.M."/>
            <person name="Duesterhoeft A."/>
            <person name="Ehrlich S.D."/>
            <person name="Emmerson P.T."/>
            <person name="Entian K.-D."/>
            <person name="Errington J."/>
            <person name="Fabret C."/>
            <person name="Ferrari E."/>
            <person name="Foulger D."/>
            <person name="Fritz C."/>
            <person name="Fujita M."/>
            <person name="Fujita Y."/>
            <person name="Fuma S."/>
            <person name="Galizzi A."/>
            <person name="Galleron N."/>
            <person name="Ghim S.-Y."/>
            <person name="Glaser P."/>
            <person name="Goffeau A."/>
            <person name="Golightly E.J."/>
            <person name="Grandi G."/>
            <person name="Guiseppi G."/>
            <person name="Guy B.J."/>
            <person name="Haga K."/>
            <person name="Haiech J."/>
            <person name="Harwood C.R."/>
            <person name="Henaut A."/>
            <person name="Hilbert H."/>
            <person name="Holsappel S."/>
            <person name="Hosono S."/>
            <person name="Hullo M.-F."/>
            <person name="Itaya M."/>
            <person name="Jones L.-M."/>
            <person name="Joris B."/>
            <person name="Karamata D."/>
            <person name="Kasahara Y."/>
            <person name="Klaerr-Blanchard M."/>
            <person name="Klein C."/>
            <person name="Kobayashi Y."/>
            <person name="Koetter P."/>
            <person name="Koningstein G."/>
            <person name="Krogh S."/>
            <person name="Kumano M."/>
            <person name="Kurita K."/>
            <person name="Lapidus A."/>
            <person name="Lardinois S."/>
            <person name="Lauber J."/>
            <person name="Lazarevic V."/>
            <person name="Lee S.-M."/>
            <person name="Levine A."/>
            <person name="Liu H."/>
            <person name="Masuda S."/>
            <person name="Mauel C."/>
            <person name="Medigue C."/>
            <person name="Medina N."/>
            <person name="Mellado R.P."/>
            <person name="Mizuno M."/>
            <person name="Moestl D."/>
            <person name="Nakai S."/>
            <person name="Noback M."/>
            <person name="Noone D."/>
            <person name="O'Reilly M."/>
            <person name="Ogawa K."/>
            <person name="Ogiwara A."/>
            <person name="Oudega B."/>
            <person name="Park S.-H."/>
            <person name="Parro V."/>
            <person name="Pohl T.M."/>
            <person name="Portetelle D."/>
            <person name="Porwollik S."/>
            <person name="Prescott A.M."/>
            <person name="Presecan E."/>
            <person name="Pujic P."/>
            <person name="Purnelle B."/>
            <person name="Rapoport G."/>
            <person name="Rey M."/>
            <person name="Reynolds S."/>
            <person name="Rieger M."/>
            <person name="Rivolta C."/>
            <person name="Rocha E."/>
            <person name="Roche B."/>
            <person name="Rose M."/>
            <person name="Sadaie Y."/>
            <person name="Sato T."/>
            <person name="Scanlan E."/>
            <person name="Schleich S."/>
            <person name="Schroeter R."/>
            <person name="Scoffone F."/>
            <person name="Sekiguchi J."/>
            <person name="Sekowska A."/>
            <person name="Seror S.J."/>
            <person name="Serror P."/>
            <person name="Shin B.-S."/>
            <person name="Soldo B."/>
            <person name="Sorokin A."/>
            <person name="Tacconi E."/>
            <person name="Takagi T."/>
            <person name="Takahashi H."/>
            <person name="Takemaru K."/>
            <person name="Takeuchi M."/>
            <person name="Tamakoshi A."/>
            <person name="Tanaka T."/>
            <person name="Terpstra P."/>
            <person name="Tognoni A."/>
            <person name="Tosato V."/>
            <person name="Uchiyama S."/>
            <person name="Vandenbol M."/>
            <person name="Vannier F."/>
            <person name="Vassarotti A."/>
            <person name="Viari A."/>
            <person name="Wambutt R."/>
            <person name="Wedler E."/>
            <person name="Wedler H."/>
            <person name="Weitzenegger T."/>
            <person name="Winters P."/>
            <person name="Wipat A."/>
            <person name="Yamamoto H."/>
            <person name="Yamane K."/>
            <person name="Yasumoto K."/>
            <person name="Yata K."/>
            <person name="Yoshida K."/>
            <person name="Yoshikawa H.-F."/>
            <person name="Zumstein E."/>
            <person name="Yoshikawa H."/>
            <person name="Danchin A."/>
        </authorList>
    </citation>
    <scope>NUCLEOTIDE SEQUENCE [LARGE SCALE GENOMIC DNA]</scope>
    <source>
        <strain>168</strain>
    </source>
</reference>
<reference key="4">
    <citation type="journal article" date="2009" name="Microbiology">
        <title>From a consortium sequence to a unified sequence: the Bacillus subtilis 168 reference genome a decade later.</title>
        <authorList>
            <person name="Barbe V."/>
            <person name="Cruveiller S."/>
            <person name="Kunst F."/>
            <person name="Lenoble P."/>
            <person name="Meurice G."/>
            <person name="Sekowska A."/>
            <person name="Vallenet D."/>
            <person name="Wang T."/>
            <person name="Moszer I."/>
            <person name="Medigue C."/>
            <person name="Danchin A."/>
        </authorList>
    </citation>
    <scope>SEQUENCE REVISION TO 134 AND 173-202</scope>
</reference>
<reference key="5">
    <citation type="journal article" date="1995" name="Gene">
        <title>Analysis of a Bacillus subtilis genome fragment using a co-operative computer system prototype.</title>
        <authorList>
            <person name="Medigue C."/>
            <person name="Moszer I."/>
            <person name="Viari A."/>
            <person name="Danchin A."/>
        </authorList>
    </citation>
    <scope>IDENTIFICATION</scope>
</reference>
<evidence type="ECO:0000305" key="1"/>